<keyword id="KW-1003">Cell membrane</keyword>
<keyword id="KW-0472">Membrane</keyword>
<keyword id="KW-0592">Phosphate transport</keyword>
<keyword id="KW-1185">Reference proteome</keyword>
<keyword id="KW-0812">Transmembrane</keyword>
<keyword id="KW-1133">Transmembrane helix</keyword>
<keyword id="KW-0813">Transport</keyword>
<reference key="1">
    <citation type="journal article" date="1996" name="Gene">
        <title>A Mycobacterium tuberculosis gene cluster encoding proteins of a phosphate transporter homologous to the Escherichia coli Pst system.</title>
        <authorList>
            <person name="Braibant M."/>
            <person name="Lefevre P."/>
            <person name="de Wit L."/>
            <person name="Peirs P."/>
            <person name="Ooms J."/>
            <person name="Huygen K."/>
            <person name="Andersen A.B."/>
            <person name="Content J."/>
        </authorList>
    </citation>
    <scope>NUCLEOTIDE SEQUENCE [GENOMIC DNA]</scope>
    <source>
        <strain>ATCC 35801 / TMC 107 / Erdman</strain>
    </source>
</reference>
<reference key="2">
    <citation type="journal article" date="1998" name="Nature">
        <title>Deciphering the biology of Mycobacterium tuberculosis from the complete genome sequence.</title>
        <authorList>
            <person name="Cole S.T."/>
            <person name="Brosch R."/>
            <person name="Parkhill J."/>
            <person name="Garnier T."/>
            <person name="Churcher C.M."/>
            <person name="Harris D.E."/>
            <person name="Gordon S.V."/>
            <person name="Eiglmeier K."/>
            <person name="Gas S."/>
            <person name="Barry C.E. III"/>
            <person name="Tekaia F."/>
            <person name="Badcock K."/>
            <person name="Basham D."/>
            <person name="Brown D."/>
            <person name="Chillingworth T."/>
            <person name="Connor R."/>
            <person name="Davies R.M."/>
            <person name="Devlin K."/>
            <person name="Feltwell T."/>
            <person name="Gentles S."/>
            <person name="Hamlin N."/>
            <person name="Holroyd S."/>
            <person name="Hornsby T."/>
            <person name="Jagels K."/>
            <person name="Krogh A."/>
            <person name="McLean J."/>
            <person name="Moule S."/>
            <person name="Murphy L.D."/>
            <person name="Oliver S."/>
            <person name="Osborne J."/>
            <person name="Quail M.A."/>
            <person name="Rajandream M.A."/>
            <person name="Rogers J."/>
            <person name="Rutter S."/>
            <person name="Seeger K."/>
            <person name="Skelton S."/>
            <person name="Squares S."/>
            <person name="Squares R."/>
            <person name="Sulston J.E."/>
            <person name="Taylor K."/>
            <person name="Whitehead S."/>
            <person name="Barrell B.G."/>
        </authorList>
    </citation>
    <scope>NUCLEOTIDE SEQUENCE [LARGE SCALE GENOMIC DNA]</scope>
    <source>
        <strain>ATCC 25618 / H37Rv</strain>
    </source>
</reference>
<reference key="3">
    <citation type="journal article" date="2010" name="Tuberculosis">
        <title>Effect of PstS sub-units or PknD deficiency on the survival of Mycobacterium tuberculosis.</title>
        <authorList>
            <person name="Vanzembergh F."/>
            <person name="Peirs P."/>
            <person name="Lefevre P."/>
            <person name="Celio N."/>
            <person name="Mathys V."/>
            <person name="Content J."/>
            <person name="Kalai M."/>
        </authorList>
    </citation>
    <scope>FUNCTION</scope>
    <scope>INDUCTION</scope>
    <source>
        <strain>H37Rv</strain>
    </source>
</reference>
<feature type="chain" id="PRO_0000060218" description="Phosphate transport system permease protein PstC 1">
    <location>
        <begin position="1"/>
        <end position="338"/>
    </location>
</feature>
<feature type="transmembrane region" description="Helical" evidence="2">
    <location>
        <begin position="19"/>
        <end position="39"/>
    </location>
</feature>
<feature type="transmembrane region" description="Helical" evidence="2">
    <location>
        <begin position="93"/>
        <end position="113"/>
    </location>
</feature>
<feature type="transmembrane region" description="Helical" evidence="2">
    <location>
        <begin position="123"/>
        <end position="143"/>
    </location>
</feature>
<feature type="transmembrane region" description="Helical" evidence="2">
    <location>
        <begin position="144"/>
        <end position="164"/>
    </location>
</feature>
<feature type="transmembrane region" description="Helical" evidence="2">
    <location>
        <begin position="181"/>
        <end position="201"/>
    </location>
</feature>
<feature type="transmembrane region" description="Helical" evidence="2">
    <location>
        <begin position="232"/>
        <end position="252"/>
    </location>
</feature>
<feature type="transmembrane region" description="Helical" evidence="2">
    <location>
        <begin position="254"/>
        <end position="274"/>
    </location>
</feature>
<feature type="transmembrane region" description="Helical" evidence="2">
    <location>
        <begin position="295"/>
        <end position="315"/>
    </location>
</feature>
<feature type="domain" description="ABC transmembrane type-1" evidence="2">
    <location>
        <begin position="87"/>
        <end position="320"/>
    </location>
</feature>
<feature type="sequence conflict" description="In Ref. 1; CAA88025." evidence="4" ref="1">
    <original>AAR</original>
    <variation>G</variation>
    <location>
        <begin position="319"/>
        <end position="321"/>
    </location>
</feature>
<name>PSTC1_MYCTU</name>
<accession>P9WG07</accession>
<accession>L0T7Y5</accession>
<accession>O05867</accession>
<accession>P0A628</accession>
<accession>P95303</accession>
<proteinExistence type="evidence at transcript level"/>
<comment type="function">
    <text evidence="5">Part of the ABC transporter complex PstSACB involved in phosphate import; probably responsible for the translocation of the substrate across the membrane.</text>
</comment>
<comment type="subunit">
    <text evidence="4">The complex is composed of two ATP-binding proteins (PstB), two transmembrane proteins (PstC and PstA) and a solute-binding protein (PstS).</text>
</comment>
<comment type="subcellular location">
    <subcellularLocation>
        <location evidence="1">Cell membrane</location>
        <topology evidence="2">Multi-pass membrane protein</topology>
    </subcellularLocation>
</comment>
<comment type="induction">
    <text evidence="3">Transcription slightly induced by phosphate starvation, part of the pstB3-pstS2-pstC1-pstA2 operon (PubMed:20933472).</text>
</comment>
<comment type="similarity">
    <text evidence="4">Belongs to the binding-protein-dependent transport system permease family. CysTW subfamily.</text>
</comment>
<protein>
    <recommendedName>
        <fullName>Phosphate transport system permease protein PstC 1</fullName>
    </recommendedName>
</protein>
<gene>
    <name type="primary">pstC1</name>
    <name type="synonym">pstC</name>
    <name type="ordered locus">Rv0935</name>
    <name type="ORF">MTCY08D9.04c</name>
</gene>
<sequence length="338" mass="34793">MLARAGEVGRAGPAIRWLGGIGAVIPLLALVLVLVVLVIEAMGAIRLNGLHFFTATEWNPGNTYGETVVTDGVAHPVGAYYGALPLIVGTLATSAIALIIAVPVSVGAALVIVERLPKRLAEAVGIVLELLAGIPSVVVGLWGAMTFGPFIAHHIAPVIAHNAPDVPVLNYLRGDPGNGEGMLVSGLVLAVMVVPIIATTTHDLFRQVPVLPREGAIALGMSNWECVRRVTLPWVSSGIVGAVVLGLGRALGETMAVAMVSGAVLGAMPANIYATMTTIAATIVSQLDSAMTDSTNFAVKTLAEVGLVLMVITLLTNVAARGMVRRVSRTALPVGRGI</sequence>
<dbReference type="EMBL" id="Z47982">
    <property type="protein sequence ID" value="CAA88025.1"/>
    <property type="molecule type" value="Genomic_DNA"/>
</dbReference>
<dbReference type="EMBL" id="AL123456">
    <property type="protein sequence ID" value="CCP43683.1"/>
    <property type="molecule type" value="Genomic_DNA"/>
</dbReference>
<dbReference type="PIR" id="G70584">
    <property type="entry name" value="G70584"/>
</dbReference>
<dbReference type="RefSeq" id="WP_003404792.1">
    <property type="nucleotide sequence ID" value="NZ_NVQJ01000001.1"/>
</dbReference>
<dbReference type="RefSeq" id="YP_177771.1">
    <property type="nucleotide sequence ID" value="NC_000962.3"/>
</dbReference>
<dbReference type="FunCoup" id="P9WG07">
    <property type="interactions" value="86"/>
</dbReference>
<dbReference type="STRING" id="83332.Rv0935"/>
<dbReference type="PaxDb" id="83332-Rv0935"/>
<dbReference type="DNASU" id="885644"/>
<dbReference type="GeneID" id="885644"/>
<dbReference type="KEGG" id="mtu:Rv0935"/>
<dbReference type="KEGG" id="mtv:RVBD_0935"/>
<dbReference type="TubercuList" id="Rv0935"/>
<dbReference type="eggNOG" id="COG0573">
    <property type="taxonomic scope" value="Bacteria"/>
</dbReference>
<dbReference type="InParanoid" id="P9WG07"/>
<dbReference type="OrthoDB" id="9775069at2"/>
<dbReference type="PhylomeDB" id="P9WG07"/>
<dbReference type="Proteomes" id="UP000001584">
    <property type="component" value="Chromosome"/>
</dbReference>
<dbReference type="GO" id="GO:0005886">
    <property type="term" value="C:plasma membrane"/>
    <property type="evidence" value="ECO:0000318"/>
    <property type="project" value="GO_Central"/>
</dbReference>
<dbReference type="GO" id="GO:0005315">
    <property type="term" value="F:phosphate transmembrane transporter activity"/>
    <property type="evidence" value="ECO:0007669"/>
    <property type="project" value="InterPro"/>
</dbReference>
<dbReference type="GO" id="GO:0035435">
    <property type="term" value="P:phosphate ion transmembrane transport"/>
    <property type="evidence" value="ECO:0000318"/>
    <property type="project" value="GO_Central"/>
</dbReference>
<dbReference type="CDD" id="cd06261">
    <property type="entry name" value="TM_PBP2"/>
    <property type="match status" value="1"/>
</dbReference>
<dbReference type="Gene3D" id="1.10.3720.10">
    <property type="entry name" value="MetI-like"/>
    <property type="match status" value="1"/>
</dbReference>
<dbReference type="InterPro" id="IPR000515">
    <property type="entry name" value="MetI-like"/>
</dbReference>
<dbReference type="InterPro" id="IPR035906">
    <property type="entry name" value="MetI-like_sf"/>
</dbReference>
<dbReference type="InterPro" id="IPR011864">
    <property type="entry name" value="Phosphate_PstC"/>
</dbReference>
<dbReference type="InterPro" id="IPR051124">
    <property type="entry name" value="Phosphate_Transport_Permease"/>
</dbReference>
<dbReference type="NCBIfam" id="TIGR02138">
    <property type="entry name" value="phosphate_pstC"/>
    <property type="match status" value="1"/>
</dbReference>
<dbReference type="PANTHER" id="PTHR30425">
    <property type="entry name" value="PHOSPHATE TRANSPORT SYSTEM PERMEASE PROTEIN PST"/>
    <property type="match status" value="1"/>
</dbReference>
<dbReference type="PANTHER" id="PTHR30425:SF1">
    <property type="entry name" value="PHOSPHATE TRANSPORT SYSTEM PERMEASE PROTEIN PSTC"/>
    <property type="match status" value="1"/>
</dbReference>
<dbReference type="Pfam" id="PF00528">
    <property type="entry name" value="BPD_transp_1"/>
    <property type="match status" value="1"/>
</dbReference>
<dbReference type="SUPFAM" id="SSF161098">
    <property type="entry name" value="MetI-like"/>
    <property type="match status" value="1"/>
</dbReference>
<dbReference type="PROSITE" id="PS50928">
    <property type="entry name" value="ABC_TM1"/>
    <property type="match status" value="1"/>
</dbReference>
<evidence type="ECO:0000250" key="1"/>
<evidence type="ECO:0000255" key="2">
    <source>
        <dbReference type="PROSITE-ProRule" id="PRU00441"/>
    </source>
</evidence>
<evidence type="ECO:0000269" key="3">
    <source>
    </source>
</evidence>
<evidence type="ECO:0000305" key="4"/>
<evidence type="ECO:0000305" key="5">
    <source>
    </source>
</evidence>
<organism>
    <name type="scientific">Mycobacterium tuberculosis (strain ATCC 25618 / H37Rv)</name>
    <dbReference type="NCBI Taxonomy" id="83332"/>
    <lineage>
        <taxon>Bacteria</taxon>
        <taxon>Bacillati</taxon>
        <taxon>Actinomycetota</taxon>
        <taxon>Actinomycetes</taxon>
        <taxon>Mycobacteriales</taxon>
        <taxon>Mycobacteriaceae</taxon>
        <taxon>Mycobacterium</taxon>
        <taxon>Mycobacterium tuberculosis complex</taxon>
    </lineage>
</organism>